<gene>
    <name evidence="1" type="primary">purA</name>
    <name type="ordered locus">MAP_3869</name>
</gene>
<reference key="1">
    <citation type="journal article" date="2005" name="Proc. Natl. Acad. Sci. U.S.A.">
        <title>The complete genome sequence of Mycobacterium avium subspecies paratuberculosis.</title>
        <authorList>
            <person name="Li L."/>
            <person name="Bannantine J.P."/>
            <person name="Zhang Q."/>
            <person name="Amonsin A."/>
            <person name="May B.J."/>
            <person name="Alt D."/>
            <person name="Banerji N."/>
            <person name="Kanjilal S."/>
            <person name="Kapur V."/>
        </authorList>
    </citation>
    <scope>NUCLEOTIDE SEQUENCE [LARGE SCALE GENOMIC DNA]</scope>
    <source>
        <strain>ATCC BAA-968 / K-10</strain>
    </source>
</reference>
<keyword id="KW-0963">Cytoplasm</keyword>
<keyword id="KW-0342">GTP-binding</keyword>
<keyword id="KW-0436">Ligase</keyword>
<keyword id="KW-0460">Magnesium</keyword>
<keyword id="KW-0479">Metal-binding</keyword>
<keyword id="KW-0547">Nucleotide-binding</keyword>
<keyword id="KW-0658">Purine biosynthesis</keyword>
<keyword id="KW-1185">Reference proteome</keyword>
<dbReference type="EC" id="6.3.4.4" evidence="1"/>
<dbReference type="EMBL" id="AE016958">
    <property type="protein sequence ID" value="AAS06419.1"/>
    <property type="molecule type" value="Genomic_DNA"/>
</dbReference>
<dbReference type="RefSeq" id="WP_003879254.1">
    <property type="nucleotide sequence ID" value="NZ_CP106873.1"/>
</dbReference>
<dbReference type="SMR" id="Q73T50"/>
<dbReference type="STRING" id="262316.MAP_3869"/>
<dbReference type="KEGG" id="mpa:MAP_3869"/>
<dbReference type="PATRIC" id="fig|262316.17.peg.4119"/>
<dbReference type="eggNOG" id="COG0104">
    <property type="taxonomic scope" value="Bacteria"/>
</dbReference>
<dbReference type="HOGENOM" id="CLU_029848_0_0_11"/>
<dbReference type="UniPathway" id="UPA00075">
    <property type="reaction ID" value="UER00335"/>
</dbReference>
<dbReference type="Proteomes" id="UP000000580">
    <property type="component" value="Chromosome"/>
</dbReference>
<dbReference type="GO" id="GO:0005737">
    <property type="term" value="C:cytoplasm"/>
    <property type="evidence" value="ECO:0007669"/>
    <property type="project" value="UniProtKB-SubCell"/>
</dbReference>
<dbReference type="GO" id="GO:0004019">
    <property type="term" value="F:adenylosuccinate synthase activity"/>
    <property type="evidence" value="ECO:0007669"/>
    <property type="project" value="UniProtKB-UniRule"/>
</dbReference>
<dbReference type="GO" id="GO:0005525">
    <property type="term" value="F:GTP binding"/>
    <property type="evidence" value="ECO:0007669"/>
    <property type="project" value="UniProtKB-UniRule"/>
</dbReference>
<dbReference type="GO" id="GO:0000287">
    <property type="term" value="F:magnesium ion binding"/>
    <property type="evidence" value="ECO:0007669"/>
    <property type="project" value="UniProtKB-UniRule"/>
</dbReference>
<dbReference type="GO" id="GO:0044208">
    <property type="term" value="P:'de novo' AMP biosynthetic process"/>
    <property type="evidence" value="ECO:0007669"/>
    <property type="project" value="UniProtKB-UniRule"/>
</dbReference>
<dbReference type="GO" id="GO:0046040">
    <property type="term" value="P:IMP metabolic process"/>
    <property type="evidence" value="ECO:0007669"/>
    <property type="project" value="TreeGrafter"/>
</dbReference>
<dbReference type="CDD" id="cd03108">
    <property type="entry name" value="AdSS"/>
    <property type="match status" value="1"/>
</dbReference>
<dbReference type="FunFam" id="1.10.300.10:FF:000001">
    <property type="entry name" value="Adenylosuccinate synthetase"/>
    <property type="match status" value="1"/>
</dbReference>
<dbReference type="FunFam" id="3.90.170.10:FF:000001">
    <property type="entry name" value="Adenylosuccinate synthetase"/>
    <property type="match status" value="1"/>
</dbReference>
<dbReference type="Gene3D" id="3.40.440.10">
    <property type="entry name" value="Adenylosuccinate Synthetase, subunit A, domain 1"/>
    <property type="match status" value="1"/>
</dbReference>
<dbReference type="Gene3D" id="1.10.300.10">
    <property type="entry name" value="Adenylosuccinate Synthetase, subunit A, domain 2"/>
    <property type="match status" value="1"/>
</dbReference>
<dbReference type="Gene3D" id="3.90.170.10">
    <property type="entry name" value="Adenylosuccinate Synthetase, subunit A, domain 3"/>
    <property type="match status" value="1"/>
</dbReference>
<dbReference type="HAMAP" id="MF_00011">
    <property type="entry name" value="Adenylosucc_synth"/>
    <property type="match status" value="1"/>
</dbReference>
<dbReference type="InterPro" id="IPR018220">
    <property type="entry name" value="Adenylosuccin_syn_GTP-bd"/>
</dbReference>
<dbReference type="InterPro" id="IPR033128">
    <property type="entry name" value="Adenylosuccin_syn_Lys_AS"/>
</dbReference>
<dbReference type="InterPro" id="IPR042109">
    <property type="entry name" value="Adenylosuccinate_synth_dom1"/>
</dbReference>
<dbReference type="InterPro" id="IPR042110">
    <property type="entry name" value="Adenylosuccinate_synth_dom2"/>
</dbReference>
<dbReference type="InterPro" id="IPR042111">
    <property type="entry name" value="Adenylosuccinate_synth_dom3"/>
</dbReference>
<dbReference type="InterPro" id="IPR001114">
    <property type="entry name" value="Adenylosuccinate_synthetase"/>
</dbReference>
<dbReference type="InterPro" id="IPR027417">
    <property type="entry name" value="P-loop_NTPase"/>
</dbReference>
<dbReference type="NCBIfam" id="NF002223">
    <property type="entry name" value="PRK01117.1"/>
    <property type="match status" value="1"/>
</dbReference>
<dbReference type="NCBIfam" id="TIGR00184">
    <property type="entry name" value="purA"/>
    <property type="match status" value="1"/>
</dbReference>
<dbReference type="PANTHER" id="PTHR11846">
    <property type="entry name" value="ADENYLOSUCCINATE SYNTHETASE"/>
    <property type="match status" value="1"/>
</dbReference>
<dbReference type="PANTHER" id="PTHR11846:SF0">
    <property type="entry name" value="ADENYLOSUCCINATE SYNTHETASE"/>
    <property type="match status" value="1"/>
</dbReference>
<dbReference type="Pfam" id="PF00709">
    <property type="entry name" value="Adenylsucc_synt"/>
    <property type="match status" value="1"/>
</dbReference>
<dbReference type="SMART" id="SM00788">
    <property type="entry name" value="Adenylsucc_synt"/>
    <property type="match status" value="1"/>
</dbReference>
<dbReference type="SUPFAM" id="SSF52540">
    <property type="entry name" value="P-loop containing nucleoside triphosphate hydrolases"/>
    <property type="match status" value="1"/>
</dbReference>
<dbReference type="PROSITE" id="PS01266">
    <property type="entry name" value="ADENYLOSUCCIN_SYN_1"/>
    <property type="match status" value="1"/>
</dbReference>
<dbReference type="PROSITE" id="PS00513">
    <property type="entry name" value="ADENYLOSUCCIN_SYN_2"/>
    <property type="match status" value="1"/>
</dbReference>
<proteinExistence type="inferred from homology"/>
<name>PURA_MYCPA</name>
<organism>
    <name type="scientific">Mycolicibacterium paratuberculosis (strain ATCC BAA-968 / K-10)</name>
    <name type="common">Mycobacterium paratuberculosis</name>
    <dbReference type="NCBI Taxonomy" id="262316"/>
    <lineage>
        <taxon>Bacteria</taxon>
        <taxon>Bacillati</taxon>
        <taxon>Actinomycetota</taxon>
        <taxon>Actinomycetes</taxon>
        <taxon>Mycobacteriales</taxon>
        <taxon>Mycobacteriaceae</taxon>
        <taxon>Mycobacterium</taxon>
        <taxon>Mycobacterium avium complex (MAC)</taxon>
    </lineage>
</organism>
<sequence>MPAIVLIGAQWGDEGKGKATDLLGGRVQWVVRYQGGNNAGHTVVLPTGENFALHLIPSGVLTPGVTNVIGNGVVVDPGVLLDELKGLEDRGVDTSRLLISADAHLLLPYHVAIDKVTERYMGNKKIGTTGRGIGPCYQDKIARIGIRVADVLDREVLTHKIEAALELKNQILVKIYNRKALDPHQVVECLLEQAEGFRHRIADTRLLLNTALEAGETVLLEGSQGTLLDVDHGTYPYVTSSNPTAGGAAVGSGIGPTRITAVLGILKAYTTRVGSGPFPTELFDENGEYLSKTGGEFGVTTGRRRRCGWFDAVIARYATRVNGITDFFLTKLDVLSSLETVPVCVGYRIDGARVNEMPMTQSDLHRAEPIYEELPGWWEDISAAREFDDLPAKARDYVLRLEELAGAHVSCIGVGPGREQAIVRRDILAARP</sequence>
<evidence type="ECO:0000255" key="1">
    <source>
        <dbReference type="HAMAP-Rule" id="MF_00011"/>
    </source>
</evidence>
<protein>
    <recommendedName>
        <fullName evidence="1">Adenylosuccinate synthetase</fullName>
        <shortName evidence="1">AMPSase</shortName>
        <shortName evidence="1">AdSS</shortName>
        <ecNumber evidence="1">6.3.4.4</ecNumber>
    </recommendedName>
    <alternativeName>
        <fullName evidence="1">IMP--aspartate ligase</fullName>
    </alternativeName>
</protein>
<accession>Q73T50</accession>
<feature type="chain" id="PRO_0000224294" description="Adenylosuccinate synthetase">
    <location>
        <begin position="1"/>
        <end position="432"/>
    </location>
</feature>
<feature type="active site" description="Proton acceptor" evidence="1">
    <location>
        <position position="13"/>
    </location>
</feature>
<feature type="active site" description="Proton donor" evidence="1">
    <location>
        <position position="41"/>
    </location>
</feature>
<feature type="binding site" evidence="1">
    <location>
        <begin position="12"/>
        <end position="18"/>
    </location>
    <ligand>
        <name>GTP</name>
        <dbReference type="ChEBI" id="CHEBI:37565"/>
    </ligand>
</feature>
<feature type="binding site" description="in other chain" evidence="1">
    <location>
        <begin position="13"/>
        <end position="16"/>
    </location>
    <ligand>
        <name>IMP</name>
        <dbReference type="ChEBI" id="CHEBI:58053"/>
        <note>ligand shared between dimeric partners</note>
    </ligand>
</feature>
<feature type="binding site" evidence="1">
    <location>
        <position position="13"/>
    </location>
    <ligand>
        <name>Mg(2+)</name>
        <dbReference type="ChEBI" id="CHEBI:18420"/>
    </ligand>
</feature>
<feature type="binding site" description="in other chain" evidence="1">
    <location>
        <begin position="38"/>
        <end position="41"/>
    </location>
    <ligand>
        <name>IMP</name>
        <dbReference type="ChEBI" id="CHEBI:58053"/>
        <note>ligand shared between dimeric partners</note>
    </ligand>
</feature>
<feature type="binding site" evidence="1">
    <location>
        <begin position="40"/>
        <end position="42"/>
    </location>
    <ligand>
        <name>GTP</name>
        <dbReference type="ChEBI" id="CHEBI:37565"/>
    </ligand>
</feature>
<feature type="binding site" evidence="1">
    <location>
        <position position="40"/>
    </location>
    <ligand>
        <name>Mg(2+)</name>
        <dbReference type="ChEBI" id="CHEBI:18420"/>
    </ligand>
</feature>
<feature type="binding site" description="in other chain" evidence="1">
    <location>
        <position position="129"/>
    </location>
    <ligand>
        <name>IMP</name>
        <dbReference type="ChEBI" id="CHEBI:58053"/>
        <note>ligand shared between dimeric partners</note>
    </ligand>
</feature>
<feature type="binding site" evidence="1">
    <location>
        <position position="143"/>
    </location>
    <ligand>
        <name>IMP</name>
        <dbReference type="ChEBI" id="CHEBI:58053"/>
        <note>ligand shared between dimeric partners</note>
    </ligand>
</feature>
<feature type="binding site" description="in other chain" evidence="1">
    <location>
        <position position="224"/>
    </location>
    <ligand>
        <name>IMP</name>
        <dbReference type="ChEBI" id="CHEBI:58053"/>
        <note>ligand shared between dimeric partners</note>
    </ligand>
</feature>
<feature type="binding site" description="in other chain" evidence="1">
    <location>
        <position position="239"/>
    </location>
    <ligand>
        <name>IMP</name>
        <dbReference type="ChEBI" id="CHEBI:58053"/>
        <note>ligand shared between dimeric partners</note>
    </ligand>
</feature>
<feature type="binding site" evidence="1">
    <location>
        <begin position="299"/>
        <end position="305"/>
    </location>
    <ligand>
        <name>substrate</name>
    </ligand>
</feature>
<feature type="binding site" description="in other chain" evidence="1">
    <location>
        <position position="303"/>
    </location>
    <ligand>
        <name>IMP</name>
        <dbReference type="ChEBI" id="CHEBI:58053"/>
        <note>ligand shared between dimeric partners</note>
    </ligand>
</feature>
<feature type="binding site" evidence="1">
    <location>
        <position position="305"/>
    </location>
    <ligand>
        <name>GTP</name>
        <dbReference type="ChEBI" id="CHEBI:37565"/>
    </ligand>
</feature>
<feature type="binding site" evidence="1">
    <location>
        <begin position="331"/>
        <end position="333"/>
    </location>
    <ligand>
        <name>GTP</name>
        <dbReference type="ChEBI" id="CHEBI:37565"/>
    </ligand>
</feature>
<feature type="binding site" evidence="1">
    <location>
        <begin position="413"/>
        <end position="415"/>
    </location>
    <ligand>
        <name>GTP</name>
        <dbReference type="ChEBI" id="CHEBI:37565"/>
    </ligand>
</feature>
<comment type="function">
    <text evidence="1">Plays an important role in the de novo pathway of purine nucleotide biosynthesis. Catalyzes the first committed step in the biosynthesis of AMP from IMP.</text>
</comment>
<comment type="catalytic activity">
    <reaction evidence="1">
        <text>IMP + L-aspartate + GTP = N(6)-(1,2-dicarboxyethyl)-AMP + GDP + phosphate + 2 H(+)</text>
        <dbReference type="Rhea" id="RHEA:15753"/>
        <dbReference type="ChEBI" id="CHEBI:15378"/>
        <dbReference type="ChEBI" id="CHEBI:29991"/>
        <dbReference type="ChEBI" id="CHEBI:37565"/>
        <dbReference type="ChEBI" id="CHEBI:43474"/>
        <dbReference type="ChEBI" id="CHEBI:57567"/>
        <dbReference type="ChEBI" id="CHEBI:58053"/>
        <dbReference type="ChEBI" id="CHEBI:58189"/>
        <dbReference type="EC" id="6.3.4.4"/>
    </reaction>
</comment>
<comment type="cofactor">
    <cofactor evidence="1">
        <name>Mg(2+)</name>
        <dbReference type="ChEBI" id="CHEBI:18420"/>
    </cofactor>
    <text evidence="1">Binds 1 Mg(2+) ion per subunit.</text>
</comment>
<comment type="pathway">
    <text evidence="1">Purine metabolism; AMP biosynthesis via de novo pathway; AMP from IMP: step 1/2.</text>
</comment>
<comment type="subunit">
    <text evidence="1">Homodimer.</text>
</comment>
<comment type="subcellular location">
    <subcellularLocation>
        <location evidence="1">Cytoplasm</location>
    </subcellularLocation>
</comment>
<comment type="similarity">
    <text evidence="1">Belongs to the adenylosuccinate synthetase family.</text>
</comment>